<accession>Q63HQ2</accession>
<accession>A8K6D7</accession>
<accession>Q5U643</accession>
<accession>Q6P3V1</accession>
<accession>Q8N124</accession>
<accession>Q8N197</accession>
<accession>Q8N7Y0</accession>
<accession>Q8N8N5</accession>
<accession>Q8NAL2</accession>
<feature type="signal peptide" evidence="3">
    <location>
        <begin position="1"/>
        <end position="24"/>
    </location>
</feature>
<feature type="chain" id="PRO_0000306803" description="Pikachurin">
    <location>
        <begin position="25"/>
        <end position="1017"/>
    </location>
</feature>
<feature type="domain" description="Fibronectin type-III 1" evidence="6">
    <location>
        <begin position="37"/>
        <end position="136"/>
    </location>
</feature>
<feature type="domain" description="Fibronectin type-III 2" evidence="6">
    <location>
        <begin position="144"/>
        <end position="239"/>
    </location>
</feature>
<feature type="domain" description="EGF-like 1" evidence="4">
    <location>
        <begin position="343"/>
        <end position="381"/>
    </location>
</feature>
<feature type="domain" description="Laminin G-like 1" evidence="5">
    <location>
        <begin position="386"/>
        <end position="564"/>
    </location>
</feature>
<feature type="domain" description="EGF-like 2" evidence="4">
    <location>
        <begin position="565"/>
        <end position="602"/>
    </location>
</feature>
<feature type="domain" description="Laminin G-like 2" evidence="5">
    <location>
        <begin position="609"/>
        <end position="788"/>
    </location>
</feature>
<feature type="domain" description="EGF-like 3" evidence="4">
    <location>
        <begin position="784"/>
        <end position="820"/>
    </location>
</feature>
<feature type="domain" description="Laminin G-like 3" evidence="5">
    <location>
        <begin position="835"/>
        <end position="1014"/>
    </location>
</feature>
<feature type="glycosylation site" description="N-linked (GlcNAc...) asparagine" evidence="3">
    <location>
        <position position="47"/>
    </location>
</feature>
<feature type="disulfide bond" evidence="1">
    <location>
        <begin position="347"/>
        <end position="358"/>
    </location>
</feature>
<feature type="disulfide bond" evidence="1">
    <location>
        <begin position="352"/>
        <end position="369"/>
    </location>
</feature>
<feature type="disulfide bond" evidence="1">
    <location>
        <begin position="371"/>
        <end position="380"/>
    </location>
</feature>
<feature type="disulfide bond" evidence="1">
    <location>
        <begin position="534"/>
        <end position="564"/>
    </location>
</feature>
<feature type="disulfide bond" evidence="1">
    <location>
        <begin position="569"/>
        <end position="580"/>
    </location>
</feature>
<feature type="disulfide bond" evidence="1">
    <location>
        <begin position="574"/>
        <end position="590"/>
    </location>
</feature>
<feature type="disulfide bond" evidence="1">
    <location>
        <begin position="592"/>
        <end position="601"/>
    </location>
</feature>
<feature type="disulfide bond" evidence="1">
    <location>
        <begin position="788"/>
        <end position="799"/>
    </location>
</feature>
<feature type="disulfide bond" evidence="1">
    <location>
        <begin position="793"/>
        <end position="808"/>
    </location>
</feature>
<feature type="disulfide bond" evidence="1">
    <location>
        <begin position="810"/>
        <end position="819"/>
    </location>
</feature>
<feature type="disulfide bond" evidence="1">
    <location>
        <begin position="987"/>
        <end position="1014"/>
    </location>
</feature>
<feature type="splice variant" id="VSP_028475" description="In isoform 5." evidence="8 9">
    <location>
        <begin position="1"/>
        <end position="865"/>
    </location>
</feature>
<feature type="splice variant" id="VSP_028476" description="In isoform 3." evidence="9">
    <location>
        <begin position="1"/>
        <end position="634"/>
    </location>
</feature>
<feature type="splice variant" id="VSP_028477" description="In isoform 4." evidence="8">
    <location>
        <begin position="1"/>
        <end position="234"/>
    </location>
</feature>
<feature type="splice variant" id="VSP_028478" description="In isoform 4." evidence="8">
    <original>RTLC</original>
    <variation>MHPG</variation>
    <location>
        <begin position="235"/>
        <end position="238"/>
    </location>
</feature>
<feature type="splice variant" id="VSP_028481" description="In isoform 2, isoform 3 and isoform 4." evidence="8 9">
    <original>ECGNYCLNT</original>
    <variation>A</variation>
    <location>
        <begin position="822"/>
        <end position="830"/>
    </location>
</feature>
<feature type="sequence variant" id="VAR_055718" description="In dbSNP:rs12522205.">
    <original>R</original>
    <variation>P</variation>
    <location>
        <position position="26"/>
    </location>
</feature>
<feature type="sequence variant" id="VAR_035302" description="In dbSNP:rs2561111.">
    <original>R</original>
    <variation>H</variation>
    <location>
        <position position="111"/>
    </location>
</feature>
<feature type="sequence variant" id="VAR_035303" description="In dbSNP:rs1465567.">
    <original>W</original>
    <variation>R</variation>
    <location>
        <position position="229"/>
    </location>
</feature>
<feature type="sequence variant" id="VAR_035304" description="In dbSNP:rs16903965." evidence="7">
    <original>T</original>
    <variation>M</variation>
    <location>
        <position position="473"/>
    </location>
</feature>
<feature type="sequence variant" id="VAR_035305" description="In dbSNP:rs6897179.">
    <original>H</original>
    <variation>N</variation>
    <location>
        <position position="576"/>
    </location>
</feature>
<feature type="sequence variant" id="VAR_055719" description="In dbSNP:rs2561818.">
    <original>V</original>
    <variation>M</variation>
    <location>
        <position position="745"/>
    </location>
</feature>
<feature type="sequence conflict" description="In Ref. 2; CAH56137." evidence="10" ref="2">
    <original>D</original>
    <variation>G</variation>
    <location>
        <position position="546"/>
    </location>
</feature>
<feature type="sequence conflict" description="In Ref. 2; CAH56137." evidence="10" ref="2">
    <original>E</original>
    <variation>G</variation>
    <location>
        <position position="602"/>
    </location>
</feature>
<feature type="sequence conflict" description="In Ref. 1; BAF84291." evidence="10" ref="1">
    <original>F</original>
    <variation>L</variation>
    <location>
        <position position="641"/>
    </location>
</feature>
<feature type="sequence conflict" description="In Ref. 2; CAH56137." evidence="10" ref="2">
    <original>F</original>
    <variation>L</variation>
    <location>
        <position position="775"/>
    </location>
</feature>
<feature type="sequence conflict" description="In Ref. 5; AAH33177." evidence="10" ref="5">
    <original>A</original>
    <variation>S</variation>
    <location>
        <position position="1005"/>
    </location>
</feature>
<feature type="strand" evidence="12">
    <location>
        <begin position="39"/>
        <end position="47"/>
    </location>
</feature>
<feature type="strand" evidence="12">
    <location>
        <begin position="50"/>
        <end position="56"/>
    </location>
</feature>
<feature type="strand" evidence="12">
    <location>
        <begin position="65"/>
        <end position="74"/>
    </location>
</feature>
<feature type="strand" evidence="12">
    <location>
        <begin position="90"/>
        <end position="101"/>
    </location>
</feature>
<feature type="strand" evidence="12">
    <location>
        <begin position="109"/>
        <end position="118"/>
    </location>
</feature>
<feature type="strand" evidence="12">
    <location>
        <begin position="121"/>
        <end position="125"/>
    </location>
</feature>
<feature type="strand" evidence="12">
    <location>
        <begin position="129"/>
        <end position="132"/>
    </location>
</feature>
<feature type="helix" evidence="12">
    <location>
        <begin position="136"/>
        <end position="138"/>
    </location>
</feature>
<feature type="strand" evidence="12">
    <location>
        <begin position="149"/>
        <end position="152"/>
    </location>
</feature>
<feature type="strand" evidence="12">
    <location>
        <begin position="154"/>
        <end position="156"/>
    </location>
</feature>
<feature type="strand" evidence="12">
    <location>
        <begin position="158"/>
        <end position="161"/>
    </location>
</feature>
<feature type="strand" evidence="12">
    <location>
        <begin position="175"/>
        <end position="181"/>
    </location>
</feature>
<feature type="turn" evidence="12">
    <location>
        <begin position="183"/>
        <end position="185"/>
    </location>
</feature>
<feature type="strand" evidence="12">
    <location>
        <begin position="196"/>
        <end position="203"/>
    </location>
</feature>
<feature type="strand" evidence="12">
    <location>
        <begin position="211"/>
        <end position="220"/>
    </location>
</feature>
<feature type="strand" evidence="11">
    <location>
        <begin position="838"/>
        <end position="843"/>
    </location>
</feature>
<feature type="strand" evidence="11">
    <location>
        <begin position="845"/>
        <end position="848"/>
    </location>
</feature>
<feature type="helix" evidence="11">
    <location>
        <begin position="851"/>
        <end position="854"/>
    </location>
</feature>
<feature type="strand" evidence="11">
    <location>
        <begin position="857"/>
        <end position="873"/>
    </location>
</feature>
<feature type="strand" evidence="11">
    <location>
        <begin position="875"/>
        <end position="881"/>
    </location>
</feature>
<feature type="strand" evidence="11">
    <location>
        <begin position="891"/>
        <end position="897"/>
    </location>
</feature>
<feature type="strand" evidence="11">
    <location>
        <begin position="900"/>
        <end position="906"/>
    </location>
</feature>
<feature type="strand" evidence="11">
    <location>
        <begin position="911"/>
        <end position="916"/>
    </location>
</feature>
<feature type="strand" evidence="11">
    <location>
        <begin position="922"/>
        <end position="924"/>
    </location>
</feature>
<feature type="strand" evidence="11">
    <location>
        <begin position="926"/>
        <end position="933"/>
    </location>
</feature>
<feature type="strand" evidence="11">
    <location>
        <begin position="936"/>
        <end position="941"/>
    </location>
</feature>
<feature type="strand" evidence="11">
    <location>
        <begin position="947"/>
        <end position="950"/>
    </location>
</feature>
<feature type="strand" evidence="11">
    <location>
        <begin position="952"/>
        <end position="954"/>
    </location>
</feature>
<feature type="strand" evidence="11">
    <location>
        <begin position="964"/>
        <end position="967"/>
    </location>
</feature>
<feature type="helix" evidence="11">
    <location>
        <begin position="972"/>
        <end position="975"/>
    </location>
</feature>
<feature type="turn" evidence="11">
    <location>
        <begin position="976"/>
        <end position="978"/>
    </location>
</feature>
<feature type="strand" evidence="11">
    <location>
        <begin position="981"/>
        <end position="983"/>
    </location>
</feature>
<feature type="strand" evidence="11">
    <location>
        <begin position="985"/>
        <end position="993"/>
    </location>
</feature>
<feature type="turn" evidence="11">
    <location>
        <begin position="994"/>
        <end position="996"/>
    </location>
</feature>
<feature type="turn" evidence="11">
    <location>
        <begin position="1001"/>
        <end position="1004"/>
    </location>
</feature>
<feature type="strand" evidence="11">
    <location>
        <begin position="1006"/>
        <end position="1009"/>
    </location>
</feature>
<reference key="1">
    <citation type="journal article" date="2004" name="Nat. Genet.">
        <title>Complete sequencing and characterization of 21,243 full-length human cDNAs.</title>
        <authorList>
            <person name="Ota T."/>
            <person name="Suzuki Y."/>
            <person name="Nishikawa T."/>
            <person name="Otsuki T."/>
            <person name="Sugiyama T."/>
            <person name="Irie R."/>
            <person name="Wakamatsu A."/>
            <person name="Hayashi K."/>
            <person name="Sato H."/>
            <person name="Nagai K."/>
            <person name="Kimura K."/>
            <person name="Makita H."/>
            <person name="Sekine M."/>
            <person name="Obayashi M."/>
            <person name="Nishi T."/>
            <person name="Shibahara T."/>
            <person name="Tanaka T."/>
            <person name="Ishii S."/>
            <person name="Yamamoto J."/>
            <person name="Saito K."/>
            <person name="Kawai Y."/>
            <person name="Isono Y."/>
            <person name="Nakamura Y."/>
            <person name="Nagahari K."/>
            <person name="Murakami K."/>
            <person name="Yasuda T."/>
            <person name="Iwayanagi T."/>
            <person name="Wagatsuma M."/>
            <person name="Shiratori A."/>
            <person name="Sudo H."/>
            <person name="Hosoiri T."/>
            <person name="Kaku Y."/>
            <person name="Kodaira H."/>
            <person name="Kondo H."/>
            <person name="Sugawara M."/>
            <person name="Takahashi M."/>
            <person name="Kanda K."/>
            <person name="Yokoi T."/>
            <person name="Furuya T."/>
            <person name="Kikkawa E."/>
            <person name="Omura Y."/>
            <person name="Abe K."/>
            <person name="Kamihara K."/>
            <person name="Katsuta N."/>
            <person name="Sato K."/>
            <person name="Tanikawa M."/>
            <person name="Yamazaki M."/>
            <person name="Ninomiya K."/>
            <person name="Ishibashi T."/>
            <person name="Yamashita H."/>
            <person name="Murakawa K."/>
            <person name="Fujimori K."/>
            <person name="Tanai H."/>
            <person name="Kimata M."/>
            <person name="Watanabe M."/>
            <person name="Hiraoka S."/>
            <person name="Chiba Y."/>
            <person name="Ishida S."/>
            <person name="Ono Y."/>
            <person name="Takiguchi S."/>
            <person name="Watanabe S."/>
            <person name="Yosida M."/>
            <person name="Hotuta T."/>
            <person name="Kusano J."/>
            <person name="Kanehori K."/>
            <person name="Takahashi-Fujii A."/>
            <person name="Hara H."/>
            <person name="Tanase T.-O."/>
            <person name="Nomura Y."/>
            <person name="Togiya S."/>
            <person name="Komai F."/>
            <person name="Hara R."/>
            <person name="Takeuchi K."/>
            <person name="Arita M."/>
            <person name="Imose N."/>
            <person name="Musashino K."/>
            <person name="Yuuki H."/>
            <person name="Oshima A."/>
            <person name="Sasaki N."/>
            <person name="Aotsuka S."/>
            <person name="Yoshikawa Y."/>
            <person name="Matsunawa H."/>
            <person name="Ichihara T."/>
            <person name="Shiohata N."/>
            <person name="Sano S."/>
            <person name="Moriya S."/>
            <person name="Momiyama H."/>
            <person name="Satoh N."/>
            <person name="Takami S."/>
            <person name="Terashima Y."/>
            <person name="Suzuki O."/>
            <person name="Nakagawa S."/>
            <person name="Senoh A."/>
            <person name="Mizoguchi H."/>
            <person name="Goto Y."/>
            <person name="Shimizu F."/>
            <person name="Wakebe H."/>
            <person name="Hishigaki H."/>
            <person name="Watanabe T."/>
            <person name="Sugiyama A."/>
            <person name="Takemoto M."/>
            <person name="Kawakami B."/>
            <person name="Yamazaki M."/>
            <person name="Watanabe K."/>
            <person name="Kumagai A."/>
            <person name="Itakura S."/>
            <person name="Fukuzumi Y."/>
            <person name="Fujimori Y."/>
            <person name="Komiyama M."/>
            <person name="Tashiro H."/>
            <person name="Tanigami A."/>
            <person name="Fujiwara T."/>
            <person name="Ono T."/>
            <person name="Yamada K."/>
            <person name="Fujii Y."/>
            <person name="Ozaki K."/>
            <person name="Hirao M."/>
            <person name="Ohmori Y."/>
            <person name="Kawabata A."/>
            <person name="Hikiji T."/>
            <person name="Kobatake N."/>
            <person name="Inagaki H."/>
            <person name="Ikema Y."/>
            <person name="Okamoto S."/>
            <person name="Okitani R."/>
            <person name="Kawakami T."/>
            <person name="Noguchi S."/>
            <person name="Itoh T."/>
            <person name="Shigeta K."/>
            <person name="Senba T."/>
            <person name="Matsumura K."/>
            <person name="Nakajima Y."/>
            <person name="Mizuno T."/>
            <person name="Morinaga M."/>
            <person name="Sasaki M."/>
            <person name="Togashi T."/>
            <person name="Oyama M."/>
            <person name="Hata H."/>
            <person name="Watanabe M."/>
            <person name="Komatsu T."/>
            <person name="Mizushima-Sugano J."/>
            <person name="Satoh T."/>
            <person name="Shirai Y."/>
            <person name="Takahashi Y."/>
            <person name="Nakagawa K."/>
            <person name="Okumura K."/>
            <person name="Nagase T."/>
            <person name="Nomura N."/>
            <person name="Kikuchi H."/>
            <person name="Masuho Y."/>
            <person name="Yamashita R."/>
            <person name="Nakai K."/>
            <person name="Yada T."/>
            <person name="Nakamura Y."/>
            <person name="Ohara O."/>
            <person name="Isogai T."/>
            <person name="Sugano S."/>
        </authorList>
    </citation>
    <scope>NUCLEOTIDE SEQUENCE [LARGE SCALE MRNA] (ISOFORMS 4 AND 5)</scope>
    <source>
        <tissue>Placenta</tissue>
        <tissue>Spleen</tissue>
        <tissue>Testis</tissue>
    </source>
</reference>
<reference key="2">
    <citation type="journal article" date="2007" name="BMC Genomics">
        <title>The full-ORF clone resource of the German cDNA consortium.</title>
        <authorList>
            <person name="Bechtel S."/>
            <person name="Rosenfelder H."/>
            <person name="Duda A."/>
            <person name="Schmidt C.P."/>
            <person name="Ernst U."/>
            <person name="Wellenreuther R."/>
            <person name="Mehrle A."/>
            <person name="Schuster C."/>
            <person name="Bahr A."/>
            <person name="Bloecker H."/>
            <person name="Heubner D."/>
            <person name="Hoerlein A."/>
            <person name="Michel G."/>
            <person name="Wedler H."/>
            <person name="Koehrer K."/>
            <person name="Ottenwaelder B."/>
            <person name="Poustka A."/>
            <person name="Wiemann S."/>
            <person name="Schupp I."/>
        </authorList>
    </citation>
    <scope>NUCLEOTIDE SEQUENCE [LARGE SCALE MRNA] (ISOFORM 1)</scope>
    <source>
        <tissue>Retina</tissue>
    </source>
</reference>
<reference key="3">
    <citation type="journal article" date="2004" name="Nature">
        <title>The DNA sequence and comparative analysis of human chromosome 5.</title>
        <authorList>
            <person name="Schmutz J."/>
            <person name="Martin J."/>
            <person name="Terry A."/>
            <person name="Couronne O."/>
            <person name="Grimwood J."/>
            <person name="Lowry S."/>
            <person name="Gordon L.A."/>
            <person name="Scott D."/>
            <person name="Xie G."/>
            <person name="Huang W."/>
            <person name="Hellsten U."/>
            <person name="Tran-Gyamfi M."/>
            <person name="She X."/>
            <person name="Prabhakar S."/>
            <person name="Aerts A."/>
            <person name="Altherr M."/>
            <person name="Bajorek E."/>
            <person name="Black S."/>
            <person name="Branscomb E."/>
            <person name="Caoile C."/>
            <person name="Challacombe J.F."/>
            <person name="Chan Y.M."/>
            <person name="Denys M."/>
            <person name="Detter J.C."/>
            <person name="Escobar J."/>
            <person name="Flowers D."/>
            <person name="Fotopulos D."/>
            <person name="Glavina T."/>
            <person name="Gomez M."/>
            <person name="Gonzales E."/>
            <person name="Goodstein D."/>
            <person name="Grigoriev I."/>
            <person name="Groza M."/>
            <person name="Hammon N."/>
            <person name="Hawkins T."/>
            <person name="Haydu L."/>
            <person name="Israni S."/>
            <person name="Jett J."/>
            <person name="Kadner K."/>
            <person name="Kimball H."/>
            <person name="Kobayashi A."/>
            <person name="Lopez F."/>
            <person name="Lou Y."/>
            <person name="Martinez D."/>
            <person name="Medina C."/>
            <person name="Morgan J."/>
            <person name="Nandkeshwar R."/>
            <person name="Noonan J.P."/>
            <person name="Pitluck S."/>
            <person name="Pollard M."/>
            <person name="Predki P."/>
            <person name="Priest J."/>
            <person name="Ramirez L."/>
            <person name="Retterer J."/>
            <person name="Rodriguez A."/>
            <person name="Rogers S."/>
            <person name="Salamov A."/>
            <person name="Salazar A."/>
            <person name="Thayer N."/>
            <person name="Tice H."/>
            <person name="Tsai M."/>
            <person name="Ustaszewska A."/>
            <person name="Vo N."/>
            <person name="Wheeler J."/>
            <person name="Wu K."/>
            <person name="Yang J."/>
            <person name="Dickson M."/>
            <person name="Cheng J.-F."/>
            <person name="Eichler E.E."/>
            <person name="Olsen A."/>
            <person name="Pennacchio L.A."/>
            <person name="Rokhsar D.S."/>
            <person name="Richardson P."/>
            <person name="Lucas S.M."/>
            <person name="Myers R.M."/>
            <person name="Rubin E.M."/>
        </authorList>
    </citation>
    <scope>NUCLEOTIDE SEQUENCE [LARGE SCALE GENOMIC DNA]</scope>
</reference>
<reference key="4">
    <citation type="submission" date="2005-07" db="EMBL/GenBank/DDBJ databases">
        <authorList>
            <person name="Mural R.J."/>
            <person name="Istrail S."/>
            <person name="Sutton G.G."/>
            <person name="Florea L."/>
            <person name="Halpern A.L."/>
            <person name="Mobarry C.M."/>
            <person name="Lippert R."/>
            <person name="Walenz B."/>
            <person name="Shatkay H."/>
            <person name="Dew I."/>
            <person name="Miller J.R."/>
            <person name="Flanigan M.J."/>
            <person name="Edwards N.J."/>
            <person name="Bolanos R."/>
            <person name="Fasulo D."/>
            <person name="Halldorsson B.V."/>
            <person name="Hannenhalli S."/>
            <person name="Turner R."/>
            <person name="Yooseph S."/>
            <person name="Lu F."/>
            <person name="Nusskern D.R."/>
            <person name="Shue B.C."/>
            <person name="Zheng X.H."/>
            <person name="Zhong F."/>
            <person name="Delcher A.L."/>
            <person name="Huson D.H."/>
            <person name="Kravitz S.A."/>
            <person name="Mouchard L."/>
            <person name="Reinert K."/>
            <person name="Remington K.A."/>
            <person name="Clark A.G."/>
            <person name="Waterman M.S."/>
            <person name="Eichler E.E."/>
            <person name="Adams M.D."/>
            <person name="Hunkapiller M.W."/>
            <person name="Myers E.W."/>
            <person name="Venter J.C."/>
        </authorList>
    </citation>
    <scope>NUCLEOTIDE SEQUENCE [LARGE SCALE GENOMIC DNA]</scope>
</reference>
<reference key="5">
    <citation type="journal article" date="2004" name="Genome Res.">
        <title>The status, quality, and expansion of the NIH full-length cDNA project: the Mammalian Gene Collection (MGC).</title>
        <authorList>
            <consortium name="The MGC Project Team"/>
        </authorList>
    </citation>
    <scope>NUCLEOTIDE SEQUENCE [LARGE SCALE MRNA] (ISOFORMS 2; 3 AND 5)</scope>
    <scope>VARIANT MET-473</scope>
    <source>
        <tissue>Kidney</tissue>
        <tissue>Lung</tissue>
        <tissue>PNS</tissue>
        <tissue>Testis</tissue>
    </source>
</reference>
<reference key="6">
    <citation type="submission" date="2008-12" db="UniProtKB">
        <authorList>
            <person name="Lubec G."/>
            <person name="Chen W.-Q."/>
            <person name="Sun Y."/>
        </authorList>
    </citation>
    <scope>PROTEIN SEQUENCE OF 874-897</scope>
    <scope>IDENTIFICATION BY MASS SPECTROMETRY</scope>
    <source>
        <tissue>Fetal brain cortex</tissue>
    </source>
</reference>
<sequence length="1017" mass="111271">MDLIRGVLLRLLLLASSLGPGAVSLRAAIRKPGKVGPPLDIKLGALNCTAFSIQWKMPRHPGSPILGYTVFYSEVGADKSLQEQLHSVPLSRDIPTTEEVIGDLKPGTEYRVSIAAYSQAGKGRLSSPRHVTTLSQDSCLPPAAPQQPHVIVVSDSEVALSWKPGASEGSAPIQYYSVEFIRPDFDKKWTSIHERIQMDSMVIKGLDPDTNYQFAVRAMNSHGPSPRSWPSDIIRTLCPEEAGSGRYGPRYITDMGAGEDDEGFEDDLDLDISFEEVKPLPATKGGNKKFLVESKKMSISNPKTISRLIPPTSASLPVTTVAPQPIPIQRKGKNGVAIMSRLFDMPCDETLCSADSFCVNDYTWGGSRCQCTLGKGGESCSEDIVIQYPQFFGHSYVTFEPLKNSYQAFQITLEFRAEAEDGLLLYCGENEHGRGDFMSLAIIRRSLQFRFNCGTGVAIIVSETKIKLGGWHTVMLYRDGLNGLLQLNNGTPVTGQSQGQYSKITFRTPLYLGGAPSAYWLVRATGTNRGFQGCVQSLAVNGRRIDMRPWPLGKALSGADVGECSSGICDEASCIHGGTCTAIKADSYICLCPLGFKGRHCEDAFTLTIPQFRESLRSYAATPWPLEPQHYLSFMEFEITFRPDSGDGVLLYSYDTGSKDFLSINLAGGHVEFRFDCGSGTGVLRSEDPLTLGNWHELRVSRTAKNGILQVDKQKIVEGMAEGGFTQIKCNTDIFIGGVPNYDDVKKNSGVLKPFSGSIQKIILNDRTIHVKHDFTSGVNVENAAHPCVRAPCAHGGSCRPRKEGYDCDCPLGFEGLHCQKECGNYCLNTIIEAIEIPQFIGRSYLTYDNPDILKRVSGSRSNVFMRFKTTAKDGLLLWRGDSPMRPNSDFISLGLRDGALVFSYNLGSGVASIMVNGSFNDGRWHRVKAVRDGQSGKITVDDYGARTGKSPGMMRQLNINGALYVGGMKEIALHTNRQYMRGLVGCISHFTLSTDYHISLVEDAVDGKNINTCGAK</sequence>
<keyword id="KW-0002">3D-structure</keyword>
<keyword id="KW-0025">Alternative splicing</keyword>
<keyword id="KW-0966">Cell projection</keyword>
<keyword id="KW-0903">Direct protein sequencing</keyword>
<keyword id="KW-1015">Disulfide bond</keyword>
<keyword id="KW-0245">EGF-like domain</keyword>
<keyword id="KW-0272">Extracellular matrix</keyword>
<keyword id="KW-0325">Glycoprotein</keyword>
<keyword id="KW-0357">Heparan sulfate</keyword>
<keyword id="KW-0654">Proteoglycan</keyword>
<keyword id="KW-1267">Proteomics identification</keyword>
<keyword id="KW-1185">Reference proteome</keyword>
<keyword id="KW-0677">Repeat</keyword>
<keyword id="KW-0964">Secreted</keyword>
<keyword id="KW-0732">Signal</keyword>
<keyword id="KW-0770">Synapse</keyword>
<name>EGFLA_HUMAN</name>
<proteinExistence type="evidence at protein level"/>
<comment type="function">
    <text evidence="2">Involved in both the retinal photoreceptor ribbon synapse formation and physiological functions of visual perception. Plays a key role in the synaptic organization of photoreceptors by mediating transsynaptic interaction between alpha-dystroglycan and GPR179 on the postsynaptic membrane. Necessary for proper bipolar dendritic tip apposition to the photoreceptor ribbon synapse. Promotes matrix assembly and cell adhesiveness.</text>
</comment>
<comment type="subunit">
    <text evidence="2">Interacts with DAG1 alpha-dystroglycan. Interacts with GPR158 and GPR179; transsynaptic interaction is required for synaptic organization of photoreceptor cells.</text>
</comment>
<comment type="interaction">
    <interactant intactId="EBI-21327031">
        <id>Q63HQ2</id>
    </interactant>
    <interactant intactId="EBI-20895185">
        <id>Q6PRD1</id>
        <label>GPR179</label>
    </interactant>
    <organismsDiffer>false</organismsDiffer>
    <experiments>3</experiments>
</comment>
<comment type="subcellular location">
    <subcellularLocation>
        <location evidence="2">Secreted</location>
        <location evidence="2">Extracellular space</location>
        <location evidence="2">Extracellular matrix</location>
    </subcellularLocation>
    <subcellularLocation>
        <location evidence="2">Synaptic cleft</location>
    </subcellularLocation>
    <subcellularLocation>
        <location evidence="2">Presynaptic active zone</location>
    </subcellularLocation>
    <text evidence="2">Detected in the synaptic cleft of the ribbon synapse around the postsynaptic terminals of bipolar cells. Colocalizes with BSN, CTBP2 and DAG1 in photoreceptor synaptic terminals.</text>
</comment>
<comment type="alternative products">
    <event type="alternative splicing"/>
    <isoform>
        <id>Q63HQ2-1</id>
        <name>1</name>
        <sequence type="displayed"/>
    </isoform>
    <isoform>
        <id>Q63HQ2-2</id>
        <name>2</name>
        <sequence type="described" ref="VSP_028481"/>
    </isoform>
    <isoform>
        <id>Q63HQ2-3</id>
        <name>3</name>
        <sequence type="described" ref="VSP_028476 VSP_028481"/>
    </isoform>
    <isoform>
        <id>Q63HQ2-4</id>
        <name>4</name>
        <sequence type="described" ref="VSP_028477 VSP_028478 VSP_028481"/>
    </isoform>
    <isoform>
        <id>Q63HQ2-5</id>
        <name>5</name>
        <sequence type="described" ref="VSP_028475"/>
    </isoform>
</comment>
<comment type="PTM">
    <text evidence="2">O-glycosylated; contains chondroitin sulfate and heparan sulfate.</text>
</comment>
<comment type="sequence caution" evidence="10">
    <conflict type="miscellaneous discrepancy">
        <sequence resource="EMBL-CDS" id="BAC04800"/>
    </conflict>
    <text>Unlikely isoform. Aberrant splice sites.</text>
</comment>
<gene>
    <name type="primary">EGFLAM</name>
    <name type="synonym">AGRINL</name>
    <name type="synonym">AGRNL</name>
    <name type="synonym">PIKA</name>
</gene>
<organism>
    <name type="scientific">Homo sapiens</name>
    <name type="common">Human</name>
    <dbReference type="NCBI Taxonomy" id="9606"/>
    <lineage>
        <taxon>Eukaryota</taxon>
        <taxon>Metazoa</taxon>
        <taxon>Chordata</taxon>
        <taxon>Craniata</taxon>
        <taxon>Vertebrata</taxon>
        <taxon>Euteleostomi</taxon>
        <taxon>Mammalia</taxon>
        <taxon>Eutheria</taxon>
        <taxon>Euarchontoglires</taxon>
        <taxon>Primates</taxon>
        <taxon>Haplorrhini</taxon>
        <taxon>Catarrhini</taxon>
        <taxon>Hominidae</taxon>
        <taxon>Homo</taxon>
    </lineage>
</organism>
<evidence type="ECO:0000250" key="1"/>
<evidence type="ECO:0000250" key="2">
    <source>
        <dbReference type="UniProtKB" id="Q4VBE4"/>
    </source>
</evidence>
<evidence type="ECO:0000255" key="3"/>
<evidence type="ECO:0000255" key="4">
    <source>
        <dbReference type="PROSITE-ProRule" id="PRU00076"/>
    </source>
</evidence>
<evidence type="ECO:0000255" key="5">
    <source>
        <dbReference type="PROSITE-ProRule" id="PRU00122"/>
    </source>
</evidence>
<evidence type="ECO:0000255" key="6">
    <source>
        <dbReference type="PROSITE-ProRule" id="PRU00316"/>
    </source>
</evidence>
<evidence type="ECO:0000269" key="7">
    <source>
    </source>
</evidence>
<evidence type="ECO:0000303" key="8">
    <source>
    </source>
</evidence>
<evidence type="ECO:0000303" key="9">
    <source>
    </source>
</evidence>
<evidence type="ECO:0000305" key="10"/>
<evidence type="ECO:0007829" key="11">
    <source>
        <dbReference type="PDB" id="7ZC9"/>
    </source>
</evidence>
<evidence type="ECO:0007829" key="12">
    <source>
        <dbReference type="PDB" id="7ZCB"/>
    </source>
</evidence>
<protein>
    <recommendedName>
        <fullName>Pikachurin</fullName>
    </recommendedName>
    <alternativeName>
        <fullName>Agrin-like protein</fullName>
    </alternativeName>
    <alternativeName>
        <fullName>EGF-like, fibronectin type-III and laminin G-like domain-containing protein</fullName>
    </alternativeName>
</protein>
<dbReference type="EMBL" id="AK092479">
    <property type="protein sequence ID" value="BAC03900.1"/>
    <property type="molecule type" value="mRNA"/>
</dbReference>
<dbReference type="EMBL" id="AK092994">
    <property type="protein sequence ID" value="BAC04013.1"/>
    <property type="molecule type" value="mRNA"/>
</dbReference>
<dbReference type="EMBL" id="AK096474">
    <property type="protein sequence ID" value="BAC04800.1"/>
    <property type="status" value="ALT_SEQ"/>
    <property type="molecule type" value="mRNA"/>
</dbReference>
<dbReference type="EMBL" id="AK097549">
    <property type="protein sequence ID" value="BAC05096.1"/>
    <property type="molecule type" value="mRNA"/>
</dbReference>
<dbReference type="EMBL" id="AK291602">
    <property type="protein sequence ID" value="BAF84291.1"/>
    <property type="molecule type" value="mRNA"/>
</dbReference>
<dbReference type="EMBL" id="BX647551">
    <property type="protein sequence ID" value="CAH56137.1"/>
    <property type="molecule type" value="mRNA"/>
</dbReference>
<dbReference type="EMBL" id="AC010338">
    <property type="status" value="NOT_ANNOTATED_CDS"/>
    <property type="molecule type" value="Genomic_DNA"/>
</dbReference>
<dbReference type="EMBL" id="AC010457">
    <property type="status" value="NOT_ANNOTATED_CDS"/>
    <property type="molecule type" value="Genomic_DNA"/>
</dbReference>
<dbReference type="EMBL" id="AC091839">
    <property type="status" value="NOT_ANNOTATED_CDS"/>
    <property type="molecule type" value="Genomic_DNA"/>
</dbReference>
<dbReference type="EMBL" id="CH471119">
    <property type="protein sequence ID" value="EAW55968.1"/>
    <property type="molecule type" value="Genomic_DNA"/>
</dbReference>
<dbReference type="EMBL" id="BC031251">
    <property type="protein sequence ID" value="AAH31251.1"/>
    <property type="molecule type" value="mRNA"/>
</dbReference>
<dbReference type="EMBL" id="BC033177">
    <property type="protein sequence ID" value="AAH33177.1"/>
    <property type="molecule type" value="mRNA"/>
</dbReference>
<dbReference type="EMBL" id="BC033188">
    <property type="protein sequence ID" value="AAH33188.1"/>
    <property type="molecule type" value="mRNA"/>
</dbReference>
<dbReference type="EMBL" id="BC063822">
    <property type="protein sequence ID" value="AAH63822.1"/>
    <property type="molecule type" value="mRNA"/>
</dbReference>
<dbReference type="CCDS" id="CCDS3924.1">
    <molecule id="Q63HQ2-2"/>
</dbReference>
<dbReference type="CCDS" id="CCDS3925.1">
    <molecule id="Q63HQ2-4"/>
</dbReference>
<dbReference type="CCDS" id="CCDS47199.1">
    <molecule id="Q63HQ2-5"/>
</dbReference>
<dbReference type="CCDS" id="CCDS56363.1">
    <molecule id="Q63HQ2-1"/>
</dbReference>
<dbReference type="RefSeq" id="NP_001192230.1">
    <molecule id="Q63HQ2-1"/>
    <property type="nucleotide sequence ID" value="NM_001205301.2"/>
</dbReference>
<dbReference type="RefSeq" id="NP_689616.2">
    <molecule id="Q63HQ2-2"/>
    <property type="nucleotide sequence ID" value="NM_152403.3"/>
</dbReference>
<dbReference type="RefSeq" id="NP_877950.1">
    <molecule id="Q63HQ2-4"/>
    <property type="nucleotide sequence ID" value="NM_182798.3"/>
</dbReference>
<dbReference type="RefSeq" id="NP_877953.1">
    <molecule id="Q63HQ2-5"/>
    <property type="nucleotide sequence ID" value="NM_182801.3"/>
</dbReference>
<dbReference type="PDB" id="7ZC9">
    <property type="method" value="X-ray"/>
    <property type="resolution" value="2.10 A"/>
    <property type="chains" value="A/B=820-1009"/>
</dbReference>
<dbReference type="PDB" id="7ZCB">
    <property type="method" value="X-ray"/>
    <property type="resolution" value="2.50 A"/>
    <property type="chains" value="B/C=24-238"/>
</dbReference>
<dbReference type="PDB" id="8D1B">
    <property type="method" value="EM"/>
    <property type="resolution" value="3.57 A"/>
    <property type="chains" value="C/D=784-1017"/>
</dbReference>
<dbReference type="PDBsum" id="7ZC9"/>
<dbReference type="PDBsum" id="7ZCB"/>
<dbReference type="PDBsum" id="8D1B"/>
<dbReference type="EMDB" id="EMD-27121"/>
<dbReference type="SASBDB" id="Q63HQ2"/>
<dbReference type="SMR" id="Q63HQ2"/>
<dbReference type="BioGRID" id="126364">
    <property type="interactions" value="16"/>
</dbReference>
<dbReference type="CORUM" id="Q63HQ2"/>
<dbReference type="FunCoup" id="Q63HQ2">
    <property type="interactions" value="122"/>
</dbReference>
<dbReference type="IntAct" id="Q63HQ2">
    <property type="interactions" value="12"/>
</dbReference>
<dbReference type="STRING" id="9606.ENSP00000346964"/>
<dbReference type="UniLectin" id="Q63HQ2"/>
<dbReference type="GlyCosmos" id="Q63HQ2">
    <property type="glycosylation" value="3 sites, 2 glycans"/>
</dbReference>
<dbReference type="GlyGen" id="Q63HQ2">
    <property type="glycosylation" value="7 sites, 4 O-linked glycans (6 sites)"/>
</dbReference>
<dbReference type="iPTMnet" id="Q63HQ2"/>
<dbReference type="PhosphoSitePlus" id="Q63HQ2"/>
<dbReference type="SwissPalm" id="Q63HQ2"/>
<dbReference type="BioMuta" id="EGFLAM"/>
<dbReference type="DMDM" id="158705944"/>
<dbReference type="jPOST" id="Q63HQ2"/>
<dbReference type="MassIVE" id="Q63HQ2"/>
<dbReference type="PaxDb" id="9606-ENSP00000346964"/>
<dbReference type="PeptideAtlas" id="Q63HQ2"/>
<dbReference type="ProteomicsDB" id="65890">
    <molecule id="Q63HQ2-1"/>
</dbReference>
<dbReference type="ProteomicsDB" id="65891">
    <molecule id="Q63HQ2-2"/>
</dbReference>
<dbReference type="ProteomicsDB" id="65892">
    <molecule id="Q63HQ2-3"/>
</dbReference>
<dbReference type="ProteomicsDB" id="65893">
    <molecule id="Q63HQ2-4"/>
</dbReference>
<dbReference type="ProteomicsDB" id="65894">
    <molecule id="Q63HQ2-5"/>
</dbReference>
<dbReference type="Antibodypedia" id="23033">
    <property type="antibodies" value="104 antibodies from 20 providers"/>
</dbReference>
<dbReference type="DNASU" id="133584"/>
<dbReference type="Ensembl" id="ENST00000322350.10">
    <molecule id="Q63HQ2-2"/>
    <property type="protein sequence ID" value="ENSP00000313084.5"/>
    <property type="gene ID" value="ENSG00000164318.18"/>
</dbReference>
<dbReference type="Ensembl" id="ENST00000336740.10">
    <molecule id="Q63HQ2-4"/>
    <property type="protein sequence ID" value="ENSP00000337607.6"/>
    <property type="gene ID" value="ENSG00000164318.18"/>
</dbReference>
<dbReference type="Ensembl" id="ENST00000354891.7">
    <molecule id="Q63HQ2-1"/>
    <property type="protein sequence ID" value="ENSP00000346964.3"/>
    <property type="gene ID" value="ENSG00000164318.18"/>
</dbReference>
<dbReference type="Ensembl" id="ENST00000397202.6">
    <molecule id="Q63HQ2-3"/>
    <property type="protein sequence ID" value="ENSP00000380385.2"/>
    <property type="gene ID" value="ENSG00000164318.18"/>
</dbReference>
<dbReference type="Ensembl" id="ENST00000397210.7">
    <molecule id="Q63HQ2-5"/>
    <property type="protein sequence ID" value="ENSP00000380393.3"/>
    <property type="gene ID" value="ENSG00000164318.18"/>
</dbReference>
<dbReference type="Ensembl" id="ENST00000506135.5">
    <molecule id="Q63HQ2-5"/>
    <property type="protein sequence ID" value="ENSP00000425579.1"/>
    <property type="gene ID" value="ENSG00000164318.18"/>
</dbReference>
<dbReference type="Ensembl" id="ENST00000514476.1">
    <molecule id="Q63HQ2-5"/>
    <property type="protein sequence ID" value="ENSP00000423228.1"/>
    <property type="gene ID" value="ENSG00000164318.18"/>
</dbReference>
<dbReference type="GeneID" id="133584"/>
<dbReference type="KEGG" id="hsa:133584"/>
<dbReference type="MANE-Select" id="ENST00000322350.10">
    <molecule id="Q63HQ2-2"/>
    <property type="protein sequence ID" value="ENSP00000313084.5"/>
    <property type="RefSeq nucleotide sequence ID" value="NM_152403.4"/>
    <property type="RefSeq protein sequence ID" value="NP_689616.2"/>
</dbReference>
<dbReference type="UCSC" id="uc003jlb.3">
    <molecule id="Q63HQ2-1"/>
    <property type="organism name" value="human"/>
</dbReference>
<dbReference type="AGR" id="HGNC:26810"/>
<dbReference type="CTD" id="133584"/>
<dbReference type="DisGeNET" id="133584"/>
<dbReference type="GeneCards" id="EGFLAM"/>
<dbReference type="HGNC" id="HGNC:26810">
    <property type="gene designation" value="EGFLAM"/>
</dbReference>
<dbReference type="HPA" id="ENSG00000164318">
    <property type="expression patterns" value="Tissue enhanced (tongue)"/>
</dbReference>
<dbReference type="MIM" id="617683">
    <property type="type" value="gene"/>
</dbReference>
<dbReference type="neXtProt" id="NX_Q63HQ2"/>
<dbReference type="OpenTargets" id="ENSG00000164318"/>
<dbReference type="PharmGKB" id="PA147358056"/>
<dbReference type="VEuPathDB" id="HostDB:ENSG00000164318"/>
<dbReference type="eggNOG" id="KOG0613">
    <property type="taxonomic scope" value="Eukaryota"/>
</dbReference>
<dbReference type="eggNOG" id="KOG3509">
    <property type="taxonomic scope" value="Eukaryota"/>
</dbReference>
<dbReference type="GeneTree" id="ENSGT00940000158504"/>
<dbReference type="HOGENOM" id="CLU_013380_0_0_1"/>
<dbReference type="InParanoid" id="Q63HQ2"/>
<dbReference type="OMA" id="CGEGTIE"/>
<dbReference type="OrthoDB" id="10014052at2759"/>
<dbReference type="PAN-GO" id="Q63HQ2">
    <property type="GO annotations" value="3 GO annotations based on evolutionary models"/>
</dbReference>
<dbReference type="PhylomeDB" id="Q63HQ2"/>
<dbReference type="TreeFam" id="TF326548"/>
<dbReference type="PathwayCommons" id="Q63HQ2"/>
<dbReference type="SignaLink" id="Q63HQ2"/>
<dbReference type="BioGRID-ORCS" id="133584">
    <property type="hits" value="15 hits in 1147 CRISPR screens"/>
</dbReference>
<dbReference type="ChiTaRS" id="EGFLAM">
    <property type="organism name" value="human"/>
</dbReference>
<dbReference type="GeneWiki" id="Pikachurin"/>
<dbReference type="GenomeRNAi" id="133584"/>
<dbReference type="Pharos" id="Q63HQ2">
    <property type="development level" value="Tbio"/>
</dbReference>
<dbReference type="PRO" id="PR:Q63HQ2"/>
<dbReference type="Proteomes" id="UP000005640">
    <property type="component" value="Chromosome 5"/>
</dbReference>
<dbReference type="RNAct" id="Q63HQ2">
    <property type="molecule type" value="protein"/>
</dbReference>
<dbReference type="Bgee" id="ENSG00000164318">
    <property type="expression patterns" value="Expressed in gastrocnemius and 123 other cell types or tissues"/>
</dbReference>
<dbReference type="ExpressionAtlas" id="Q63HQ2">
    <property type="expression patterns" value="baseline and differential"/>
</dbReference>
<dbReference type="GO" id="GO:0005604">
    <property type="term" value="C:basement membrane"/>
    <property type="evidence" value="ECO:0007669"/>
    <property type="project" value="Ensembl"/>
</dbReference>
<dbReference type="GO" id="GO:0042995">
    <property type="term" value="C:cell projection"/>
    <property type="evidence" value="ECO:0007669"/>
    <property type="project" value="UniProtKB-KW"/>
</dbReference>
<dbReference type="GO" id="GO:0005614">
    <property type="term" value="C:interstitial matrix"/>
    <property type="evidence" value="ECO:0007669"/>
    <property type="project" value="Ensembl"/>
</dbReference>
<dbReference type="GO" id="GO:0098684">
    <property type="term" value="C:photoreceptor ribbon synapse"/>
    <property type="evidence" value="ECO:0007669"/>
    <property type="project" value="Ensembl"/>
</dbReference>
<dbReference type="GO" id="GO:0048786">
    <property type="term" value="C:presynaptic active zone"/>
    <property type="evidence" value="ECO:0007669"/>
    <property type="project" value="UniProtKB-SubCell"/>
</dbReference>
<dbReference type="GO" id="GO:0043083">
    <property type="term" value="C:synaptic cleft"/>
    <property type="evidence" value="ECO:0007669"/>
    <property type="project" value="UniProtKB-SubCell"/>
</dbReference>
<dbReference type="GO" id="GO:0005509">
    <property type="term" value="F:calcium ion binding"/>
    <property type="evidence" value="ECO:0007669"/>
    <property type="project" value="InterPro"/>
</dbReference>
<dbReference type="GO" id="GO:0005539">
    <property type="term" value="F:glycosaminoglycan binding"/>
    <property type="evidence" value="ECO:0007669"/>
    <property type="project" value="Ensembl"/>
</dbReference>
<dbReference type="GO" id="GO:0030198">
    <property type="term" value="P:extracellular matrix organization"/>
    <property type="evidence" value="ECO:0007669"/>
    <property type="project" value="Ensembl"/>
</dbReference>
<dbReference type="GO" id="GO:0010811">
    <property type="term" value="P:positive regulation of cell-substrate adhesion"/>
    <property type="evidence" value="ECO:0007669"/>
    <property type="project" value="Ensembl"/>
</dbReference>
<dbReference type="CDD" id="cd00054">
    <property type="entry name" value="EGF_CA"/>
    <property type="match status" value="2"/>
</dbReference>
<dbReference type="CDD" id="cd00063">
    <property type="entry name" value="FN3"/>
    <property type="match status" value="2"/>
</dbReference>
<dbReference type="CDD" id="cd00110">
    <property type="entry name" value="LamG"/>
    <property type="match status" value="3"/>
</dbReference>
<dbReference type="FunFam" id="2.60.40.10:FF:001294">
    <property type="entry name" value="EGF like, fibronectin type III and laminin G domains"/>
    <property type="match status" value="1"/>
</dbReference>
<dbReference type="FunFam" id="2.60.120.200:FF:000032">
    <property type="entry name" value="pikachurin isoform X1"/>
    <property type="match status" value="1"/>
</dbReference>
<dbReference type="FunFam" id="2.60.120.200:FF:000033">
    <property type="entry name" value="pikachurin isoform X1"/>
    <property type="match status" value="1"/>
</dbReference>
<dbReference type="FunFam" id="2.60.120.200:FF:000034">
    <property type="entry name" value="pikachurin isoform X1"/>
    <property type="match status" value="1"/>
</dbReference>
<dbReference type="FunFam" id="2.60.40.10:FF:000793">
    <property type="entry name" value="pikachurin isoform X1"/>
    <property type="match status" value="1"/>
</dbReference>
<dbReference type="FunFam" id="2.10.25.10:FF:000220">
    <property type="entry name" value="pikachurin isoform X3"/>
    <property type="match status" value="1"/>
</dbReference>
<dbReference type="FunFam" id="2.10.25.10:FF:000248">
    <property type="entry name" value="pikachurin isoform X3"/>
    <property type="match status" value="1"/>
</dbReference>
<dbReference type="Gene3D" id="2.60.120.200">
    <property type="match status" value="3"/>
</dbReference>
<dbReference type="Gene3D" id="2.60.40.10">
    <property type="entry name" value="Immunoglobulins"/>
    <property type="match status" value="2"/>
</dbReference>
<dbReference type="Gene3D" id="2.10.25.10">
    <property type="entry name" value="Laminin"/>
    <property type="match status" value="2"/>
</dbReference>
<dbReference type="InterPro" id="IPR013320">
    <property type="entry name" value="ConA-like_dom_sf"/>
</dbReference>
<dbReference type="InterPro" id="IPR001881">
    <property type="entry name" value="EGF-like_Ca-bd_dom"/>
</dbReference>
<dbReference type="InterPro" id="IPR000742">
    <property type="entry name" value="EGF-like_dom"/>
</dbReference>
<dbReference type="InterPro" id="IPR056943">
    <property type="entry name" value="EGF_Pikachurin"/>
</dbReference>
<dbReference type="InterPro" id="IPR003961">
    <property type="entry name" value="FN3_dom"/>
</dbReference>
<dbReference type="InterPro" id="IPR036116">
    <property type="entry name" value="FN3_sf"/>
</dbReference>
<dbReference type="InterPro" id="IPR013783">
    <property type="entry name" value="Ig-like_fold"/>
</dbReference>
<dbReference type="InterPro" id="IPR001791">
    <property type="entry name" value="Laminin_G"/>
</dbReference>
<dbReference type="InterPro" id="IPR050372">
    <property type="entry name" value="Neurexin-related_CASP"/>
</dbReference>
<dbReference type="PANTHER" id="PTHR15036:SF88">
    <property type="entry name" value="PIKACHURIN"/>
    <property type="match status" value="1"/>
</dbReference>
<dbReference type="PANTHER" id="PTHR15036">
    <property type="entry name" value="PIKACHURIN-LIKE PROTEIN"/>
    <property type="match status" value="1"/>
</dbReference>
<dbReference type="Pfam" id="PF00008">
    <property type="entry name" value="EGF"/>
    <property type="match status" value="2"/>
</dbReference>
<dbReference type="Pfam" id="PF25016">
    <property type="entry name" value="EGF_Pikachurin"/>
    <property type="match status" value="1"/>
</dbReference>
<dbReference type="Pfam" id="PF00041">
    <property type="entry name" value="fn3"/>
    <property type="match status" value="2"/>
</dbReference>
<dbReference type="Pfam" id="PF00054">
    <property type="entry name" value="Laminin_G_1"/>
    <property type="match status" value="1"/>
</dbReference>
<dbReference type="Pfam" id="PF02210">
    <property type="entry name" value="Laminin_G_2"/>
    <property type="match status" value="2"/>
</dbReference>
<dbReference type="SMART" id="SM00181">
    <property type="entry name" value="EGF"/>
    <property type="match status" value="3"/>
</dbReference>
<dbReference type="SMART" id="SM00179">
    <property type="entry name" value="EGF_CA"/>
    <property type="match status" value="2"/>
</dbReference>
<dbReference type="SMART" id="SM00060">
    <property type="entry name" value="FN3"/>
    <property type="match status" value="2"/>
</dbReference>
<dbReference type="SMART" id="SM00282">
    <property type="entry name" value="LamG"/>
    <property type="match status" value="3"/>
</dbReference>
<dbReference type="SUPFAM" id="SSF49899">
    <property type="entry name" value="Concanavalin A-like lectins/glucanases"/>
    <property type="match status" value="3"/>
</dbReference>
<dbReference type="SUPFAM" id="SSF49265">
    <property type="entry name" value="Fibronectin type III"/>
    <property type="match status" value="1"/>
</dbReference>
<dbReference type="PROSITE" id="PS00022">
    <property type="entry name" value="EGF_1"/>
    <property type="match status" value="3"/>
</dbReference>
<dbReference type="PROSITE" id="PS01186">
    <property type="entry name" value="EGF_2"/>
    <property type="match status" value="2"/>
</dbReference>
<dbReference type="PROSITE" id="PS50026">
    <property type="entry name" value="EGF_3"/>
    <property type="match status" value="3"/>
</dbReference>
<dbReference type="PROSITE" id="PS50853">
    <property type="entry name" value="FN3"/>
    <property type="match status" value="2"/>
</dbReference>
<dbReference type="PROSITE" id="PS50025">
    <property type="entry name" value="LAM_G_DOMAIN"/>
    <property type="match status" value="3"/>
</dbReference>